<comment type="function">
    <text evidence="1">Involved in lipopolysaccharide (LPS) biosynthesis. Translocates lipid A-core from the inner to the outer leaflet of the inner membrane. Transmembrane domains (TMD) form a pore in the inner membrane and the ATP-binding domain (NBD) is responsible for energy generation.</text>
</comment>
<comment type="catalytic activity">
    <reaction evidence="1">
        <text>ATP + H2O + lipid A-core oligosaccharideSide 1 = ADP + phosphate + lipid A-core oligosaccharideSide 2.</text>
        <dbReference type="EC" id="7.5.2.6"/>
    </reaction>
</comment>
<comment type="subunit">
    <text evidence="1">Homodimer.</text>
</comment>
<comment type="subcellular location">
    <subcellularLocation>
        <location evidence="1">Cell inner membrane</location>
        <topology evidence="1">Multi-pass membrane protein</topology>
    </subcellularLocation>
</comment>
<comment type="domain">
    <text evidence="1">In MsbA the ATP-binding domain (NBD) and the transmembrane domain (TMD) are fused.</text>
</comment>
<comment type="similarity">
    <text evidence="1">Belongs to the ABC transporter superfamily. Lipid exporter (TC 3.A.1.106) family.</text>
</comment>
<accession>Q6F9X0</accession>
<organism>
    <name type="scientific">Acinetobacter baylyi (strain ATCC 33305 / BD413 / ADP1)</name>
    <dbReference type="NCBI Taxonomy" id="62977"/>
    <lineage>
        <taxon>Bacteria</taxon>
        <taxon>Pseudomonadati</taxon>
        <taxon>Pseudomonadota</taxon>
        <taxon>Gammaproteobacteria</taxon>
        <taxon>Moraxellales</taxon>
        <taxon>Moraxellaceae</taxon>
        <taxon>Acinetobacter</taxon>
    </lineage>
</organism>
<dbReference type="EC" id="7.5.2.6" evidence="1"/>
<dbReference type="EMBL" id="CR543861">
    <property type="protein sequence ID" value="CAG69143.1"/>
    <property type="molecule type" value="Genomic_DNA"/>
</dbReference>
<dbReference type="RefSeq" id="WP_004928194.1">
    <property type="nucleotide sequence ID" value="NC_005966.1"/>
</dbReference>
<dbReference type="SMR" id="Q6F9X0"/>
<dbReference type="STRING" id="202950.GCA_001485005_00043"/>
<dbReference type="GeneID" id="45234680"/>
<dbReference type="KEGG" id="aci:ACIAD2365"/>
<dbReference type="eggNOG" id="COG1132">
    <property type="taxonomic scope" value="Bacteria"/>
</dbReference>
<dbReference type="HOGENOM" id="CLU_000604_84_3_6"/>
<dbReference type="OrthoDB" id="9806127at2"/>
<dbReference type="BioCyc" id="ASP62977:ACIAD_RS10815-MONOMER"/>
<dbReference type="Proteomes" id="UP000000430">
    <property type="component" value="Chromosome"/>
</dbReference>
<dbReference type="GO" id="GO:0005886">
    <property type="term" value="C:plasma membrane"/>
    <property type="evidence" value="ECO:0007669"/>
    <property type="project" value="UniProtKB-SubCell"/>
</dbReference>
<dbReference type="GO" id="GO:0015421">
    <property type="term" value="F:ABC-type oligopeptide transporter activity"/>
    <property type="evidence" value="ECO:0007669"/>
    <property type="project" value="TreeGrafter"/>
</dbReference>
<dbReference type="GO" id="GO:0005524">
    <property type="term" value="F:ATP binding"/>
    <property type="evidence" value="ECO:0007669"/>
    <property type="project" value="UniProtKB-KW"/>
</dbReference>
<dbReference type="GO" id="GO:0016887">
    <property type="term" value="F:ATP hydrolysis activity"/>
    <property type="evidence" value="ECO:0007669"/>
    <property type="project" value="InterPro"/>
</dbReference>
<dbReference type="GO" id="GO:0034040">
    <property type="term" value="F:ATPase-coupled lipid transmembrane transporter activity"/>
    <property type="evidence" value="ECO:0007669"/>
    <property type="project" value="InterPro"/>
</dbReference>
<dbReference type="CDD" id="cd18552">
    <property type="entry name" value="ABC_6TM_MsbA_like"/>
    <property type="match status" value="1"/>
</dbReference>
<dbReference type="FunFam" id="3.40.50.300:FF:000218">
    <property type="entry name" value="Multidrug ABC transporter ATP-binding protein"/>
    <property type="match status" value="1"/>
</dbReference>
<dbReference type="Gene3D" id="1.20.1560.10">
    <property type="entry name" value="ABC transporter type 1, transmembrane domain"/>
    <property type="match status" value="1"/>
</dbReference>
<dbReference type="Gene3D" id="3.40.50.300">
    <property type="entry name" value="P-loop containing nucleotide triphosphate hydrolases"/>
    <property type="match status" value="1"/>
</dbReference>
<dbReference type="InterPro" id="IPR003593">
    <property type="entry name" value="AAA+_ATPase"/>
</dbReference>
<dbReference type="InterPro" id="IPR011527">
    <property type="entry name" value="ABC1_TM_dom"/>
</dbReference>
<dbReference type="InterPro" id="IPR036640">
    <property type="entry name" value="ABC1_TM_sf"/>
</dbReference>
<dbReference type="InterPro" id="IPR003439">
    <property type="entry name" value="ABC_transporter-like_ATP-bd"/>
</dbReference>
<dbReference type="InterPro" id="IPR017871">
    <property type="entry name" value="ABC_transporter-like_CS"/>
</dbReference>
<dbReference type="InterPro" id="IPR011917">
    <property type="entry name" value="ABC_transpr_lipidA"/>
</dbReference>
<dbReference type="InterPro" id="IPR027417">
    <property type="entry name" value="P-loop_NTPase"/>
</dbReference>
<dbReference type="InterPro" id="IPR039421">
    <property type="entry name" value="Type_1_exporter"/>
</dbReference>
<dbReference type="NCBIfam" id="TIGR02203">
    <property type="entry name" value="MsbA_lipidA"/>
    <property type="match status" value="1"/>
</dbReference>
<dbReference type="PANTHER" id="PTHR43394:SF1">
    <property type="entry name" value="ATP-BINDING CASSETTE SUB-FAMILY B MEMBER 10, MITOCHONDRIAL"/>
    <property type="match status" value="1"/>
</dbReference>
<dbReference type="PANTHER" id="PTHR43394">
    <property type="entry name" value="ATP-DEPENDENT PERMEASE MDL1, MITOCHONDRIAL"/>
    <property type="match status" value="1"/>
</dbReference>
<dbReference type="Pfam" id="PF00664">
    <property type="entry name" value="ABC_membrane"/>
    <property type="match status" value="1"/>
</dbReference>
<dbReference type="Pfam" id="PF00005">
    <property type="entry name" value="ABC_tran"/>
    <property type="match status" value="1"/>
</dbReference>
<dbReference type="SMART" id="SM00382">
    <property type="entry name" value="AAA"/>
    <property type="match status" value="1"/>
</dbReference>
<dbReference type="SUPFAM" id="SSF90123">
    <property type="entry name" value="ABC transporter transmembrane region"/>
    <property type="match status" value="1"/>
</dbReference>
<dbReference type="SUPFAM" id="SSF52540">
    <property type="entry name" value="P-loop containing nucleoside triphosphate hydrolases"/>
    <property type="match status" value="1"/>
</dbReference>
<dbReference type="PROSITE" id="PS50929">
    <property type="entry name" value="ABC_TM1F"/>
    <property type="match status" value="1"/>
</dbReference>
<dbReference type="PROSITE" id="PS00211">
    <property type="entry name" value="ABC_TRANSPORTER_1"/>
    <property type="match status" value="1"/>
</dbReference>
<dbReference type="PROSITE" id="PS50893">
    <property type="entry name" value="ABC_TRANSPORTER_2"/>
    <property type="match status" value="1"/>
</dbReference>
<dbReference type="PROSITE" id="PS51239">
    <property type="entry name" value="MSBA"/>
    <property type="match status" value="1"/>
</dbReference>
<feature type="chain" id="PRO_0000092567" description="ATP-dependent lipid A-core flippase">
    <location>
        <begin position="1"/>
        <end position="574"/>
    </location>
</feature>
<feature type="transmembrane region" description="Helical" evidence="1">
    <location>
        <begin position="11"/>
        <end position="31"/>
    </location>
</feature>
<feature type="transmembrane region" description="Helical" evidence="1">
    <location>
        <begin position="60"/>
        <end position="80"/>
    </location>
</feature>
<feature type="transmembrane region" description="Helical" evidence="1">
    <location>
        <begin position="156"/>
        <end position="176"/>
    </location>
</feature>
<feature type="transmembrane region" description="Helical" evidence="1">
    <location>
        <begin position="244"/>
        <end position="264"/>
    </location>
</feature>
<feature type="domain" description="ABC transmembrane type-1" evidence="1">
    <location>
        <begin position="23"/>
        <end position="304"/>
    </location>
</feature>
<feature type="domain" description="ABC transporter" evidence="1">
    <location>
        <begin position="335"/>
        <end position="570"/>
    </location>
</feature>
<feature type="binding site" evidence="1">
    <location>
        <begin position="368"/>
        <end position="375"/>
    </location>
    <ligand>
        <name>ATP</name>
        <dbReference type="ChEBI" id="CHEBI:30616"/>
    </ligand>
</feature>
<evidence type="ECO:0000255" key="1">
    <source>
        <dbReference type="HAMAP-Rule" id="MF_01703"/>
    </source>
</evidence>
<gene>
    <name evidence="1" type="primary">msbA</name>
    <name type="ordered locus">ACIAD2365</name>
</gene>
<keyword id="KW-0067">ATP-binding</keyword>
<keyword id="KW-0997">Cell inner membrane</keyword>
<keyword id="KW-1003">Cell membrane</keyword>
<keyword id="KW-0445">Lipid transport</keyword>
<keyword id="KW-0472">Membrane</keyword>
<keyword id="KW-0547">Nucleotide-binding</keyword>
<keyword id="KW-1278">Translocase</keyword>
<keyword id="KW-0812">Transmembrane</keyword>
<keyword id="KW-1133">Transmembrane helix</keyword>
<keyword id="KW-0813">Transport</keyword>
<proteinExistence type="inferred from homology"/>
<sequence>MKQDFKVYVRLLSYLKPYWGIALLVLVGFGINAATEVSVAKLLKYIIDAIQEGSRADLDWFPLLIVLLVFFRGLGLFMGGYYTAVISRRLIFSIRQEIYAKLIRLPSQYYLDNSSGHISAKIMYNVEQLTAASSESLKIMVKDGLITLGLLGYLLYTNWRLTLCIFIFMPIIGVLVRKASKRMRKLSIQVQNTMGDVNHVVQESIGGQAVVKSFVGEEFEQKRFYKSSEDNLKRGLKMVIVQNLNSPLVQLVMAMAMSLIVWLALRPQILGETTAGEFVAYITAAGLLAKPIKNLTDVNEKLQRGIAAAYSVFELLDLPSEENHGTQTPKLQGDVRFDHVTLEYAGQVKAIKDFNLTIEPGETVAIVGRSGAGKTSLVNLLVRFQEVTSGSLYLDHIPIQDIELSCLRQQVAMVNQQVVLFNRSVRENIAYGQLEGAAEADIVAAAKAAYAHDFIMNLPQGYDTILGAQGLNLSGGQRQRIAIARAILKNAPILILDEATSALDNESEHFIQKAFDEAMQNRTTIVIAHRLSTIENADRIVVMDKGQIIEQGTHQELLLKQGAYFQLHQRNFEE</sequence>
<name>MSBA_ACIAD</name>
<protein>
    <recommendedName>
        <fullName evidence="1">ATP-dependent lipid A-core flippase</fullName>
        <ecNumber evidence="1">7.5.2.6</ecNumber>
    </recommendedName>
    <alternativeName>
        <fullName evidence="1">Lipid A export ATP-binding/permease protein MsbA</fullName>
    </alternativeName>
</protein>
<reference key="1">
    <citation type="journal article" date="2004" name="Nucleic Acids Res.">
        <title>Unique features revealed by the genome sequence of Acinetobacter sp. ADP1, a versatile and naturally transformation competent bacterium.</title>
        <authorList>
            <person name="Barbe V."/>
            <person name="Vallenet D."/>
            <person name="Fonknechten N."/>
            <person name="Kreimeyer A."/>
            <person name="Oztas S."/>
            <person name="Labarre L."/>
            <person name="Cruveiller S."/>
            <person name="Robert C."/>
            <person name="Duprat S."/>
            <person name="Wincker P."/>
            <person name="Ornston L.N."/>
            <person name="Weissenbach J."/>
            <person name="Marliere P."/>
            <person name="Cohen G.N."/>
            <person name="Medigue C."/>
        </authorList>
    </citation>
    <scope>NUCLEOTIDE SEQUENCE [LARGE SCALE GENOMIC DNA]</scope>
    <source>
        <strain>ATCC 33305 / BD413 / ADP1</strain>
    </source>
</reference>